<feature type="chain" id="PRO_0000096790" description="Interleukin-33">
    <location>
        <begin position="1"/>
        <end position="270"/>
    </location>
</feature>
<feature type="propeptide" id="PRO_0000430083" evidence="16">
    <location>
        <begin position="1"/>
        <end position="94"/>
    </location>
</feature>
<feature type="chain" id="PRO_0000430084" description="Interleukin-33 (95-270)">
    <location>
        <begin position="95"/>
        <end position="270"/>
    </location>
</feature>
<feature type="chain" id="PRO_0000430085" description="Interleukin-33 (99-270)">
    <location>
        <begin position="99"/>
        <end position="270"/>
    </location>
</feature>
<feature type="chain" id="PRO_0000430086" description="Interleukin-33 (109-270)">
    <location>
        <begin position="109"/>
        <end position="270"/>
    </location>
</feature>
<feature type="region of interest" description="Homeodomain-like HTH domain" evidence="4">
    <location>
        <begin position="1"/>
        <end position="65"/>
    </location>
</feature>
<feature type="region of interest" description="Interaction with RELA" evidence="1">
    <location>
        <begin position="64"/>
        <end position="111"/>
    </location>
</feature>
<feature type="site" description="Cleavage; by CTSG" evidence="16">
    <location>
        <begin position="94"/>
        <end position="95"/>
    </location>
</feature>
<feature type="site" description="Cleavage; by ELANE" evidence="16">
    <location>
        <begin position="98"/>
        <end position="99"/>
    </location>
</feature>
<feature type="site" description="Cleavage; by CTSG" evidence="16">
    <location>
        <begin position="108"/>
        <end position="109"/>
    </location>
</feature>
<feature type="splice variant" id="VSP_045440" description="In isoform 4." evidence="21">
    <original>KSQQKAKEVCPMYFMKLRSGLMIKKEACYFRRETTKRPSLKTGRKHKRHLVLAACQQQSTVECFAFGISGVQKYTRALHDSSITGISPITEYLASLSTYNDQSITFALEDESYEIYVEDLKKDEKKD</original>
    <variation>N</variation>
    <location>
        <begin position="31"/>
        <end position="157"/>
    </location>
</feature>
<feature type="splice variant" id="VSP_044948" description="In isoform 3." evidence="22">
    <location>
        <begin position="72"/>
        <end position="113"/>
    </location>
</feature>
<feature type="splice variant" id="VSP_042728" description="In isoform 2." evidence="21">
    <location>
        <begin position="115"/>
        <end position="156"/>
    </location>
</feature>
<feature type="sequence variant" id="VAR_049576" description="In dbSNP:rs16924241.">
    <original>I</original>
    <variation>M</variation>
    <location>
        <position position="263"/>
    </location>
</feature>
<feature type="mutagenesis site" description="Decreases affinity for IL1RL1." evidence="17">
    <original>E</original>
    <variation>K</variation>
    <location>
        <position position="144"/>
    </location>
</feature>
<feature type="mutagenesis site" description="7-fold decrease in affinity for IL1RL1." evidence="17">
    <original>E</original>
    <variation>K</variation>
    <location>
        <position position="148"/>
    </location>
</feature>
<feature type="mutagenesis site" description="Almost abolishes binding to IL1RL1." evidence="17">
    <original>D</original>
    <variation>K</variation>
    <location>
        <position position="149"/>
    </location>
</feature>
<feature type="mutagenesis site" description="8-fold decrease in affinity for IL1RL1." evidence="17">
    <original>E</original>
    <variation>K</variation>
    <location>
        <position position="165"/>
    </location>
</feature>
<feature type="mutagenesis site" description="Decreases affinity for IL1RL1." evidence="17">
    <original>D</original>
    <variation>K</variation>
    <location>
        <position position="244"/>
    </location>
</feature>
<feature type="sequence conflict" description="In Ref. 5; BAG36208." evidence="23" ref="5">
    <original>E</original>
    <variation>G</variation>
    <location>
        <position position="139"/>
    </location>
</feature>
<feature type="strand" evidence="25">
    <location>
        <begin position="112"/>
        <end position="115"/>
    </location>
</feature>
<feature type="strand" evidence="26">
    <location>
        <begin position="119"/>
        <end position="127"/>
    </location>
</feature>
<feature type="turn" evidence="25">
    <location>
        <begin position="129"/>
        <end position="131"/>
    </location>
</feature>
<feature type="strand" evidence="26">
    <location>
        <begin position="133"/>
        <end position="138"/>
    </location>
</feature>
<feature type="strand" evidence="26">
    <location>
        <begin position="140"/>
        <end position="148"/>
    </location>
</feature>
<feature type="strand" evidence="26">
    <location>
        <begin position="158"/>
        <end position="169"/>
    </location>
</feature>
<feature type="turn" evidence="25">
    <location>
        <begin position="170"/>
        <end position="172"/>
    </location>
</feature>
<feature type="strand" evidence="26">
    <location>
        <begin position="180"/>
        <end position="189"/>
    </location>
</feature>
<feature type="strand" evidence="26">
    <location>
        <begin position="193"/>
        <end position="197"/>
    </location>
</feature>
<feature type="turn" evidence="26">
    <location>
        <begin position="198"/>
        <end position="201"/>
    </location>
</feature>
<feature type="strand" evidence="26">
    <location>
        <begin position="202"/>
        <end position="206"/>
    </location>
</feature>
<feature type="helix" evidence="26">
    <location>
        <begin position="214"/>
        <end position="216"/>
    </location>
</feature>
<feature type="strand" evidence="26">
    <location>
        <begin position="218"/>
        <end position="224"/>
    </location>
</feature>
<feature type="strand" evidence="26">
    <location>
        <begin position="228"/>
        <end position="235"/>
    </location>
</feature>
<feature type="strand" evidence="26">
    <location>
        <begin position="238"/>
        <end position="243"/>
    </location>
</feature>
<feature type="strand" evidence="26">
    <location>
        <begin position="246"/>
        <end position="251"/>
    </location>
</feature>
<feature type="helix" evidence="25">
    <location>
        <begin position="261"/>
        <end position="263"/>
    </location>
</feature>
<feature type="strand" evidence="26">
    <location>
        <begin position="265"/>
        <end position="267"/>
    </location>
</feature>
<dbReference type="EMBL" id="AB024518">
    <property type="protein sequence ID" value="BAA75892.1"/>
    <property type="molecule type" value="mRNA"/>
</dbReference>
<dbReference type="EMBL" id="AY905581">
    <property type="protein sequence ID" value="AAX86998.1"/>
    <property type="molecule type" value="mRNA"/>
</dbReference>
<dbReference type="EMBL" id="HQ641439">
    <property type="protein sequence ID" value="ADR77828.1"/>
    <property type="molecule type" value="mRNA"/>
</dbReference>
<dbReference type="EMBL" id="AK295908">
    <property type="protein sequence ID" value="BAG58697.1"/>
    <property type="molecule type" value="mRNA"/>
</dbReference>
<dbReference type="EMBL" id="AK303943">
    <property type="protein sequence ID" value="BAG64871.1"/>
    <property type="molecule type" value="mRNA"/>
</dbReference>
<dbReference type="EMBL" id="AK313414">
    <property type="protein sequence ID" value="BAG36208.1"/>
    <property type="molecule type" value="mRNA"/>
</dbReference>
<dbReference type="EMBL" id="CR407619">
    <property type="protein sequence ID" value="CAG28547.1"/>
    <property type="molecule type" value="mRNA"/>
</dbReference>
<dbReference type="EMBL" id="AL353741">
    <property type="status" value="NOT_ANNOTATED_CDS"/>
    <property type="molecule type" value="Genomic_DNA"/>
</dbReference>
<dbReference type="EMBL" id="CH471071">
    <property type="protein sequence ID" value="EAW58748.1"/>
    <property type="molecule type" value="Genomic_DNA"/>
</dbReference>
<dbReference type="EMBL" id="CH471071">
    <property type="protein sequence ID" value="EAW58750.1"/>
    <property type="molecule type" value="Genomic_DNA"/>
</dbReference>
<dbReference type="EMBL" id="CH471071">
    <property type="protein sequence ID" value="EAW58751.1"/>
    <property type="molecule type" value="Genomic_DNA"/>
</dbReference>
<dbReference type="EMBL" id="BC047085">
    <property type="protein sequence ID" value="AAH47085.1"/>
    <property type="molecule type" value="mRNA"/>
</dbReference>
<dbReference type="CCDS" id="CCDS56563.1">
    <molecule id="O95760-2"/>
</dbReference>
<dbReference type="CCDS" id="CCDS56564.1">
    <molecule id="O95760-4"/>
</dbReference>
<dbReference type="CCDS" id="CCDS6468.1">
    <molecule id="O95760-1"/>
</dbReference>
<dbReference type="CCDS" id="CCDS83341.1">
    <molecule id="O95760-3"/>
</dbReference>
<dbReference type="RefSeq" id="NP_001186569.1">
    <molecule id="O95760-2"/>
    <property type="nucleotide sequence ID" value="NM_001199640.2"/>
</dbReference>
<dbReference type="RefSeq" id="NP_001186570.1">
    <molecule id="O95760-4"/>
    <property type="nucleotide sequence ID" value="NM_001199641.2"/>
</dbReference>
<dbReference type="RefSeq" id="NP_001300973.1">
    <molecule id="O95760-1"/>
    <property type="nucleotide sequence ID" value="NM_001314044.2"/>
</dbReference>
<dbReference type="RefSeq" id="NP_001300974.1">
    <molecule id="O95760-1"/>
    <property type="nucleotide sequence ID" value="NM_001314045.2"/>
</dbReference>
<dbReference type="RefSeq" id="NP_001300975.1">
    <property type="nucleotide sequence ID" value="NM_001314046.1"/>
</dbReference>
<dbReference type="RefSeq" id="NP_001300976.1">
    <property type="nucleotide sequence ID" value="NM_001314047.1"/>
</dbReference>
<dbReference type="RefSeq" id="NP_001300977.1">
    <molecule id="O95760-3"/>
    <property type="nucleotide sequence ID" value="NM_001314048.2"/>
</dbReference>
<dbReference type="RefSeq" id="NP_254274.1">
    <molecule id="O95760-1"/>
    <property type="nucleotide sequence ID" value="NM_033439.4"/>
</dbReference>
<dbReference type="RefSeq" id="XP_047280016.1">
    <molecule id="O95760-1"/>
    <property type="nucleotide sequence ID" value="XM_047424060.1"/>
</dbReference>
<dbReference type="RefSeq" id="XP_047280017.1">
    <molecule id="O95760-1"/>
    <property type="nucleotide sequence ID" value="XM_047424061.1"/>
</dbReference>
<dbReference type="RefSeq" id="XP_047280018.1">
    <molecule id="O95760-1"/>
    <property type="nucleotide sequence ID" value="XM_047424062.1"/>
</dbReference>
<dbReference type="RefSeq" id="XP_054220123.1">
    <molecule id="O95760-1"/>
    <property type="nucleotide sequence ID" value="XM_054364148.1"/>
</dbReference>
<dbReference type="RefSeq" id="XP_054220124.1">
    <molecule id="O95760-1"/>
    <property type="nucleotide sequence ID" value="XM_054364149.1"/>
</dbReference>
<dbReference type="RefSeq" id="XP_054220125.1">
    <molecule id="O95760-1"/>
    <property type="nucleotide sequence ID" value="XM_054364150.1"/>
</dbReference>
<dbReference type="PDB" id="2KLL">
    <property type="method" value="NMR"/>
    <property type="chains" value="A=111-270"/>
</dbReference>
<dbReference type="PDB" id="4KC3">
    <property type="method" value="X-ray"/>
    <property type="resolution" value="3.27 A"/>
    <property type="chains" value="A=112-270"/>
</dbReference>
<dbReference type="PDBsum" id="2KLL"/>
<dbReference type="PDBsum" id="4KC3"/>
<dbReference type="BMRB" id="O95760"/>
<dbReference type="SMR" id="O95760"/>
<dbReference type="BioGRID" id="124776">
    <property type="interactions" value="9"/>
</dbReference>
<dbReference type="ComplexPortal" id="CPX-10322">
    <property type="entry name" value="IL33 receptor-ligand complex"/>
</dbReference>
<dbReference type="ComplexPortal" id="CPX-10324">
    <property type="entry name" value="IL33-IL1RL1 decoy complex"/>
</dbReference>
<dbReference type="CORUM" id="O95760"/>
<dbReference type="DIP" id="DIP-37862N"/>
<dbReference type="FunCoup" id="O95760">
    <property type="interactions" value="361"/>
</dbReference>
<dbReference type="IntAct" id="O95760">
    <property type="interactions" value="7"/>
</dbReference>
<dbReference type="MINT" id="O95760"/>
<dbReference type="STRING" id="9606.ENSP00000370842"/>
<dbReference type="BindingDB" id="O95760"/>
<dbReference type="ChEMBL" id="CHEMBL4630890"/>
<dbReference type="DrugBank" id="DB16473">
    <property type="generic name" value="MEDI3506"/>
</dbReference>
<dbReference type="iPTMnet" id="O95760"/>
<dbReference type="PhosphoSitePlus" id="O95760"/>
<dbReference type="BioMuta" id="IL33"/>
<dbReference type="jPOST" id="O95760"/>
<dbReference type="MassIVE" id="O95760"/>
<dbReference type="PaxDb" id="9606-ENSP00000370842"/>
<dbReference type="PeptideAtlas" id="O95760"/>
<dbReference type="ProteomicsDB" id="4342"/>
<dbReference type="ProteomicsDB" id="51036">
    <molecule id="O95760-1"/>
</dbReference>
<dbReference type="ProteomicsDB" id="51037">
    <molecule id="O95760-2"/>
</dbReference>
<dbReference type="ABCD" id="O95760">
    <property type="antibodies" value="7 sequenced antibodies"/>
</dbReference>
<dbReference type="Antibodypedia" id="3362">
    <property type="antibodies" value="1401 antibodies from 45 providers"/>
</dbReference>
<dbReference type="DNASU" id="90865"/>
<dbReference type="Ensembl" id="ENST00000381434.7">
    <molecule id="O95760-1"/>
    <property type="protein sequence ID" value="ENSP00000370842.3"/>
    <property type="gene ID" value="ENSG00000137033.12"/>
</dbReference>
<dbReference type="Ensembl" id="ENST00000417746.6">
    <molecule id="O95760-4"/>
    <property type="protein sequence ID" value="ENSP00000394039.2"/>
    <property type="gene ID" value="ENSG00000137033.12"/>
</dbReference>
<dbReference type="Ensembl" id="ENST00000456383.3">
    <molecule id="O95760-2"/>
    <property type="protein sequence ID" value="ENSP00000414238.2"/>
    <property type="gene ID" value="ENSG00000137033.12"/>
</dbReference>
<dbReference type="Ensembl" id="ENST00000611532.4">
    <molecule id="O95760-3"/>
    <property type="protein sequence ID" value="ENSP00000478858.1"/>
    <property type="gene ID" value="ENSG00000137033.12"/>
</dbReference>
<dbReference type="Ensembl" id="ENST00000682010.1">
    <molecule id="O95760-1"/>
    <property type="protein sequence ID" value="ENSP00000507310.1"/>
    <property type="gene ID" value="ENSG00000137033.12"/>
</dbReference>
<dbReference type="GeneID" id="90865"/>
<dbReference type="KEGG" id="hsa:90865"/>
<dbReference type="MANE-Select" id="ENST00000682010.1">
    <property type="protein sequence ID" value="ENSP00000507310.1"/>
    <property type="RefSeq nucleotide sequence ID" value="NM_033439.4"/>
    <property type="RefSeq protein sequence ID" value="NP_254274.1"/>
</dbReference>
<dbReference type="UCSC" id="uc011lmh.3">
    <molecule id="O95760-1"/>
    <property type="organism name" value="human"/>
</dbReference>
<dbReference type="AGR" id="HGNC:16028"/>
<dbReference type="CTD" id="90865"/>
<dbReference type="DisGeNET" id="90865"/>
<dbReference type="GeneCards" id="IL33"/>
<dbReference type="HGNC" id="HGNC:16028">
    <property type="gene designation" value="IL33"/>
</dbReference>
<dbReference type="HPA" id="ENSG00000137033">
    <property type="expression patterns" value="Tissue enhanced (urinary)"/>
</dbReference>
<dbReference type="MalaCards" id="IL33"/>
<dbReference type="MIM" id="608678">
    <property type="type" value="gene"/>
</dbReference>
<dbReference type="neXtProt" id="NX_O95760"/>
<dbReference type="OpenTargets" id="ENSG00000137033"/>
<dbReference type="PharmGKB" id="PA162392005"/>
<dbReference type="VEuPathDB" id="HostDB:ENSG00000137033"/>
<dbReference type="eggNOG" id="ENOG502RW83">
    <property type="taxonomic scope" value="Eukaryota"/>
</dbReference>
<dbReference type="GeneTree" id="ENSGT00390000005185"/>
<dbReference type="HOGENOM" id="CLU_1795771_0_0_1"/>
<dbReference type="InParanoid" id="O95760"/>
<dbReference type="OMA" id="KTACYFR"/>
<dbReference type="OrthoDB" id="9836513at2759"/>
<dbReference type="PAN-GO" id="O95760">
    <property type="GO annotations" value="3 GO annotations based on evolutionary models"/>
</dbReference>
<dbReference type="PhylomeDB" id="O95760"/>
<dbReference type="TreeFam" id="TF338120"/>
<dbReference type="PathwayCommons" id="O95760"/>
<dbReference type="Reactome" id="R-HSA-1257604">
    <property type="pathway name" value="PIP3 activates AKT signaling"/>
</dbReference>
<dbReference type="Reactome" id="R-HSA-5689880">
    <property type="pathway name" value="Ub-specific processing proteases"/>
</dbReference>
<dbReference type="Reactome" id="R-HSA-6811558">
    <property type="pathway name" value="PI5P, PP2A and IER3 Regulate PI3K/AKT Signaling"/>
</dbReference>
<dbReference type="Reactome" id="R-HSA-9014843">
    <property type="pathway name" value="Interleukin-33 signaling"/>
</dbReference>
<dbReference type="SignaLink" id="O95760"/>
<dbReference type="SIGNOR" id="O95760"/>
<dbReference type="BioGRID-ORCS" id="90865">
    <property type="hits" value="7 hits in 1142 CRISPR screens"/>
</dbReference>
<dbReference type="CD-CODE" id="DEE660B4">
    <property type="entry name" value="Stress granule"/>
</dbReference>
<dbReference type="ChiTaRS" id="IL33">
    <property type="organism name" value="human"/>
</dbReference>
<dbReference type="EvolutionaryTrace" id="O95760"/>
<dbReference type="GenomeRNAi" id="90865"/>
<dbReference type="Pharos" id="O95760">
    <property type="development level" value="Tbio"/>
</dbReference>
<dbReference type="PRO" id="PR:O95760"/>
<dbReference type="Proteomes" id="UP000005640">
    <property type="component" value="Chromosome 9"/>
</dbReference>
<dbReference type="RNAct" id="O95760">
    <property type="molecule type" value="protein"/>
</dbReference>
<dbReference type="Bgee" id="ENSG00000137033">
    <property type="expression patterns" value="Expressed in calcaneal tendon and 163 other cell types or tissues"/>
</dbReference>
<dbReference type="GO" id="GO:0005694">
    <property type="term" value="C:chromosome"/>
    <property type="evidence" value="ECO:0007669"/>
    <property type="project" value="UniProtKB-SubCell"/>
</dbReference>
<dbReference type="GO" id="GO:0005737">
    <property type="term" value="C:cytoplasm"/>
    <property type="evidence" value="ECO:0000314"/>
    <property type="project" value="CACAO"/>
</dbReference>
<dbReference type="GO" id="GO:0005576">
    <property type="term" value="C:extracellular region"/>
    <property type="evidence" value="ECO:0000304"/>
    <property type="project" value="Reactome"/>
</dbReference>
<dbReference type="GO" id="GO:0005615">
    <property type="term" value="C:extracellular space"/>
    <property type="evidence" value="ECO:0000314"/>
    <property type="project" value="UniProt"/>
</dbReference>
<dbReference type="GO" id="GO:0043231">
    <property type="term" value="C:intracellular membrane-bounded organelle"/>
    <property type="evidence" value="ECO:0000314"/>
    <property type="project" value="HPA"/>
</dbReference>
<dbReference type="GO" id="GO:0005654">
    <property type="term" value="C:nucleoplasm"/>
    <property type="evidence" value="ECO:0000314"/>
    <property type="project" value="HPA"/>
</dbReference>
<dbReference type="GO" id="GO:0005634">
    <property type="term" value="C:nucleus"/>
    <property type="evidence" value="ECO:0000314"/>
    <property type="project" value="CACAO"/>
</dbReference>
<dbReference type="GO" id="GO:0030133">
    <property type="term" value="C:transport vesicle"/>
    <property type="evidence" value="ECO:0007669"/>
    <property type="project" value="UniProtKB-SubCell"/>
</dbReference>
<dbReference type="GO" id="GO:0005125">
    <property type="term" value="F:cytokine activity"/>
    <property type="evidence" value="ECO:0000314"/>
    <property type="project" value="BHF-UCL"/>
</dbReference>
<dbReference type="GO" id="GO:0002112">
    <property type="term" value="F:interleukin-33 receptor binding"/>
    <property type="evidence" value="ECO:0007669"/>
    <property type="project" value="Ensembl"/>
</dbReference>
<dbReference type="GO" id="GO:0140367">
    <property type="term" value="P:antibacterial innate immune response"/>
    <property type="evidence" value="ECO:0000250"/>
    <property type="project" value="ARUK-UCL"/>
</dbReference>
<dbReference type="GO" id="GO:0051607">
    <property type="term" value="P:defense response to virus"/>
    <property type="evidence" value="ECO:0007669"/>
    <property type="project" value="Ensembl"/>
</dbReference>
<dbReference type="GO" id="GO:0097191">
    <property type="term" value="P:extrinsic apoptotic signaling pathway"/>
    <property type="evidence" value="ECO:0007669"/>
    <property type="project" value="Ensembl"/>
</dbReference>
<dbReference type="GO" id="GO:0010467">
    <property type="term" value="P:gene expression"/>
    <property type="evidence" value="ECO:0007669"/>
    <property type="project" value="Ensembl"/>
</dbReference>
<dbReference type="GO" id="GO:0038172">
    <property type="term" value="P:interleukin-33-mediated signaling pathway"/>
    <property type="evidence" value="ECO:0000250"/>
    <property type="project" value="ARUK-UCL"/>
</dbReference>
<dbReference type="GO" id="GO:0030225">
    <property type="term" value="P:macrophage differentiation"/>
    <property type="evidence" value="ECO:0000250"/>
    <property type="project" value="UniProtKB"/>
</dbReference>
<dbReference type="GO" id="GO:0002282">
    <property type="term" value="P:microglial cell activation involved in immune response"/>
    <property type="evidence" value="ECO:0007669"/>
    <property type="project" value="Ensembl"/>
</dbReference>
<dbReference type="GO" id="GO:0061518">
    <property type="term" value="P:microglial cell proliferation"/>
    <property type="evidence" value="ECO:0007669"/>
    <property type="project" value="Ensembl"/>
</dbReference>
<dbReference type="GO" id="GO:0002638">
    <property type="term" value="P:negative regulation of immunoglobulin production"/>
    <property type="evidence" value="ECO:0007669"/>
    <property type="project" value="Ensembl"/>
</dbReference>
<dbReference type="GO" id="GO:0106015">
    <property type="term" value="P:negative regulation of inflammatory response to wounding"/>
    <property type="evidence" value="ECO:0000314"/>
    <property type="project" value="UniProt"/>
</dbReference>
<dbReference type="GO" id="GO:0002686">
    <property type="term" value="P:negative regulation of leukocyte migration"/>
    <property type="evidence" value="ECO:0007669"/>
    <property type="project" value="Ensembl"/>
</dbReference>
<dbReference type="GO" id="GO:0120042">
    <property type="term" value="P:negative regulation of macrophage proliferation"/>
    <property type="evidence" value="ECO:0000250"/>
    <property type="project" value="ARUK-UCL"/>
</dbReference>
<dbReference type="GO" id="GO:0002826">
    <property type="term" value="P:negative regulation of T-helper 1 type immune response"/>
    <property type="evidence" value="ECO:0007669"/>
    <property type="project" value="Ensembl"/>
</dbReference>
<dbReference type="GO" id="GO:0000122">
    <property type="term" value="P:negative regulation of transcription by RNA polymerase II"/>
    <property type="evidence" value="ECO:0000315"/>
    <property type="project" value="CACAO"/>
</dbReference>
<dbReference type="GO" id="GO:0032689">
    <property type="term" value="P:negative regulation of type II interferon production"/>
    <property type="evidence" value="ECO:0007669"/>
    <property type="project" value="Ensembl"/>
</dbReference>
<dbReference type="GO" id="GO:0010186">
    <property type="term" value="P:positive regulation of cellular defense response"/>
    <property type="evidence" value="ECO:0000250"/>
    <property type="project" value="ARUK-UCL"/>
</dbReference>
<dbReference type="GO" id="GO:0032722">
    <property type="term" value="P:positive regulation of chemokine production"/>
    <property type="evidence" value="ECO:0000314"/>
    <property type="project" value="BHF-UCL"/>
</dbReference>
<dbReference type="GO" id="GO:0001819">
    <property type="term" value="P:positive regulation of cytokine production"/>
    <property type="evidence" value="ECO:0000318"/>
    <property type="project" value="GO_Central"/>
</dbReference>
<dbReference type="GO" id="GO:0010628">
    <property type="term" value="P:positive regulation of gene expression"/>
    <property type="evidence" value="ECO:0000250"/>
    <property type="project" value="ARUK-UCL"/>
</dbReference>
<dbReference type="GO" id="GO:0010560">
    <property type="term" value="P:positive regulation of glycoprotein biosynthetic process"/>
    <property type="evidence" value="ECO:0000250"/>
    <property type="project" value="ARUK-UCL"/>
</dbReference>
<dbReference type="GO" id="GO:0002639">
    <property type="term" value="P:positive regulation of immunoglobulin production"/>
    <property type="evidence" value="ECO:0007669"/>
    <property type="project" value="Ensembl"/>
</dbReference>
<dbReference type="GO" id="GO:0050729">
    <property type="term" value="P:positive regulation of inflammatory response"/>
    <property type="evidence" value="ECO:0000250"/>
    <property type="project" value="BHF-UCL"/>
</dbReference>
<dbReference type="GO" id="GO:0032736">
    <property type="term" value="P:positive regulation of interleukin-13 production"/>
    <property type="evidence" value="ECO:0007669"/>
    <property type="project" value="Ensembl"/>
</dbReference>
<dbReference type="GO" id="GO:0032753">
    <property type="term" value="P:positive regulation of interleukin-4 production"/>
    <property type="evidence" value="ECO:0007669"/>
    <property type="project" value="Ensembl"/>
</dbReference>
<dbReference type="GO" id="GO:0032754">
    <property type="term" value="P:positive regulation of interleukin-5 production"/>
    <property type="evidence" value="ECO:0007669"/>
    <property type="project" value="Ensembl"/>
</dbReference>
<dbReference type="GO" id="GO:0032755">
    <property type="term" value="P:positive regulation of interleukin-6 production"/>
    <property type="evidence" value="ECO:0000250"/>
    <property type="project" value="ARUK-UCL"/>
</dbReference>
<dbReference type="GO" id="GO:0043032">
    <property type="term" value="P:positive regulation of macrophage activation"/>
    <property type="evidence" value="ECO:0000314"/>
    <property type="project" value="BHF-UCL"/>
</dbReference>
<dbReference type="GO" id="GO:0045345">
    <property type="term" value="P:positive regulation of MHC class I biosynthetic process"/>
    <property type="evidence" value="ECO:0007669"/>
    <property type="project" value="Ensembl"/>
</dbReference>
<dbReference type="GO" id="GO:0045348">
    <property type="term" value="P:positive regulation of MHC class II biosynthetic process"/>
    <property type="evidence" value="ECO:0007669"/>
    <property type="project" value="Ensembl"/>
</dbReference>
<dbReference type="GO" id="GO:0150078">
    <property type="term" value="P:positive regulation of neuroinflammatory response"/>
    <property type="evidence" value="ECO:0000304"/>
    <property type="project" value="ARUK-UCL"/>
</dbReference>
<dbReference type="GO" id="GO:0032436">
    <property type="term" value="P:positive regulation of proteasomal ubiquitin-dependent protein catabolic process"/>
    <property type="evidence" value="ECO:0007669"/>
    <property type="project" value="Ensembl"/>
</dbReference>
<dbReference type="GO" id="GO:0045944">
    <property type="term" value="P:positive regulation of transcription by RNA polymerase II"/>
    <property type="evidence" value="ECO:0000250"/>
    <property type="project" value="BHF-UCL"/>
</dbReference>
<dbReference type="GO" id="GO:0032760">
    <property type="term" value="P:positive regulation of tumor necrosis factor production"/>
    <property type="evidence" value="ECO:0000250"/>
    <property type="project" value="ARUK-UCL"/>
</dbReference>
<dbReference type="GO" id="GO:0002830">
    <property type="term" value="P:positive regulation of type 2 immune response"/>
    <property type="evidence" value="ECO:0007669"/>
    <property type="project" value="Ensembl"/>
</dbReference>
<dbReference type="GO" id="GO:0006606">
    <property type="term" value="P:protein import into nucleus"/>
    <property type="evidence" value="ECO:0007669"/>
    <property type="project" value="Ensembl"/>
</dbReference>
<dbReference type="GO" id="GO:0009611">
    <property type="term" value="P:response to wounding"/>
    <property type="evidence" value="ECO:0007669"/>
    <property type="project" value="Ensembl"/>
</dbReference>
<dbReference type="GO" id="GO:0042092">
    <property type="term" value="P:type 2 immune response"/>
    <property type="evidence" value="ECO:0007669"/>
    <property type="project" value="Ensembl"/>
</dbReference>
<dbReference type="CDD" id="cd23299">
    <property type="entry name" value="beta-trefoil_IL33"/>
    <property type="match status" value="1"/>
</dbReference>
<dbReference type="FunFam" id="2.80.10.50:FF:000052">
    <property type="entry name" value="Interleukin 33"/>
    <property type="match status" value="1"/>
</dbReference>
<dbReference type="Gene3D" id="2.80.10.50">
    <property type="match status" value="1"/>
</dbReference>
<dbReference type="InterPro" id="IPR026145">
    <property type="entry name" value="IL-33"/>
</dbReference>
<dbReference type="InterPro" id="IPR053902">
    <property type="entry name" value="IL33_C"/>
</dbReference>
<dbReference type="PANTHER" id="PTHR21114">
    <property type="entry name" value="DVS27 PROTEIN"/>
    <property type="match status" value="1"/>
</dbReference>
<dbReference type="PANTHER" id="PTHR21114:SF0">
    <property type="entry name" value="INTERLEUKIN-33"/>
    <property type="match status" value="1"/>
</dbReference>
<dbReference type="Pfam" id="PF15095">
    <property type="entry name" value="IL33_bt"/>
    <property type="match status" value="1"/>
</dbReference>
<gene>
    <name evidence="24" type="primary">IL33</name>
    <name type="synonym">C9orf26</name>
    <name type="synonym">IL1F11</name>
    <name type="synonym">NFHEV</name>
</gene>
<sequence length="270" mass="30759">MKPKMKYSTNKISTAKWKNTASKALCFKLGKSQQKAKEVCPMYFMKLRSGLMIKKEACYFRRETTKRPSLKTGRKHKRHLVLAACQQQSTVECFAFGISGVQKYTRALHDSSITGISPITEYLASLSTYNDQSITFALEDESYEIYVEDLKKDEKKDKVLLSYYESQHPSNESGDGVDGKMLMVTLSPTKDFWLHANNKEHSVELHKCEKPLPDQAFFVLHNMHSNCVSFECKTDPGVFIGVKDNHLALIKVDSSENLCTENILFKLSET</sequence>
<accession>O95760</accession>
<accession>B2R8L1</accession>
<accession>B4DJ35</accession>
<accession>B4E1Q9</accession>
<accession>D3DRI5</accession>
<accession>E7EAX4</accession>
<accession>Q2YEJ5</accession>
<proteinExistence type="evidence at protein level"/>
<organism>
    <name type="scientific">Homo sapiens</name>
    <name type="common">Human</name>
    <dbReference type="NCBI Taxonomy" id="9606"/>
    <lineage>
        <taxon>Eukaryota</taxon>
        <taxon>Metazoa</taxon>
        <taxon>Chordata</taxon>
        <taxon>Craniata</taxon>
        <taxon>Vertebrata</taxon>
        <taxon>Euteleostomi</taxon>
        <taxon>Mammalia</taxon>
        <taxon>Eutheria</taxon>
        <taxon>Euarchontoglires</taxon>
        <taxon>Primates</taxon>
        <taxon>Haplorrhini</taxon>
        <taxon>Catarrhini</taxon>
        <taxon>Hominidae</taxon>
        <taxon>Homo</taxon>
    </lineage>
</organism>
<name>IL33_HUMAN</name>
<evidence type="ECO:0000250" key="1">
    <source>
        <dbReference type="UniProtKB" id="Q8BVZ5"/>
    </source>
</evidence>
<evidence type="ECO:0000269" key="2">
    <source>
    </source>
</evidence>
<evidence type="ECO:0000269" key="3">
    <source>
    </source>
</evidence>
<evidence type="ECO:0000269" key="4">
    <source>
    </source>
</evidence>
<evidence type="ECO:0000269" key="5">
    <source>
    </source>
</evidence>
<evidence type="ECO:0000269" key="6">
    <source>
    </source>
</evidence>
<evidence type="ECO:0000269" key="7">
    <source>
    </source>
</evidence>
<evidence type="ECO:0000269" key="8">
    <source>
    </source>
</evidence>
<evidence type="ECO:0000269" key="9">
    <source>
    </source>
</evidence>
<evidence type="ECO:0000269" key="10">
    <source>
    </source>
</evidence>
<evidence type="ECO:0000269" key="11">
    <source>
    </source>
</evidence>
<evidence type="ECO:0000269" key="12">
    <source>
    </source>
</evidence>
<evidence type="ECO:0000269" key="13">
    <source>
    </source>
</evidence>
<evidence type="ECO:0000269" key="14">
    <source>
    </source>
</evidence>
<evidence type="ECO:0000269" key="15">
    <source>
    </source>
</evidence>
<evidence type="ECO:0000269" key="16">
    <source>
    </source>
</evidence>
<evidence type="ECO:0000269" key="17">
    <source>
    </source>
</evidence>
<evidence type="ECO:0000269" key="18">
    <source>
    </source>
</evidence>
<evidence type="ECO:0000269" key="19">
    <source>
    </source>
</evidence>
<evidence type="ECO:0000269" key="20">
    <source>
    </source>
</evidence>
<evidence type="ECO:0000303" key="21">
    <source>
    </source>
</evidence>
<evidence type="ECO:0000303" key="22">
    <source>
    </source>
</evidence>
<evidence type="ECO:0000305" key="23"/>
<evidence type="ECO:0000312" key="24">
    <source>
        <dbReference type="HGNC" id="HGNC:16028"/>
    </source>
</evidence>
<evidence type="ECO:0007829" key="25">
    <source>
        <dbReference type="PDB" id="2KLL"/>
    </source>
</evidence>
<evidence type="ECO:0007829" key="26">
    <source>
        <dbReference type="PDB" id="4KC3"/>
    </source>
</evidence>
<reference key="1">
    <citation type="journal article" date="2003" name="Am. J. Pathol.">
        <title>Molecular characterization of NF-HEV, a nuclear factor preferentially expressed in human high endothelial venules.</title>
        <authorList>
            <person name="Baekkevold E.S."/>
            <person name="Roussigne M."/>
            <person name="Yamanaka T."/>
            <person name="Johansen F.-E."/>
            <person name="Jahnsen F.L."/>
            <person name="Amalric F."/>
            <person name="Brandtzaeg P."/>
            <person name="Erard M."/>
            <person name="Haraldsen G."/>
            <person name="Girard J.-P."/>
        </authorList>
    </citation>
    <scope>NUCLEOTIDE SEQUENCE [MRNA] (ISOFORM 1)</scope>
    <scope>SUBCELLULAR LOCATION</scope>
    <scope>TISSUE SPECIFICITY</scope>
    <source>
        <tissue>Endothelial cell</tissue>
    </source>
</reference>
<reference key="2">
    <citation type="journal article" date="1999" name="J. Cereb. Blood Flow Metab.">
        <title>Identification of genes differentially expressed in canine vasospastic cerebral arteries after subarachnoid hemorrhage.</title>
        <authorList>
            <person name="Onda H."/>
            <person name="Kasuya H."/>
            <person name="Takakura K."/>
            <person name="Hori T."/>
            <person name="Imaizumi T."/>
            <person name="Takeuchi T."/>
            <person name="Inoue I."/>
            <person name="Takeda J."/>
        </authorList>
    </citation>
    <scope>NUCLEOTIDE SEQUENCE [MRNA] (ISOFORM 1)</scope>
</reference>
<reference key="3">
    <citation type="journal article" date="2005" name="Immunity">
        <title>IL-33, an interleukin-1-like cytokine that signals via the IL-1 receptor-related protein ST 2 and induces T helper type 2-associated cytokines.</title>
        <authorList>
            <person name="Schmitz J."/>
            <person name="Owyang A."/>
            <person name="Oldham E."/>
            <person name="Song Y."/>
            <person name="Murphy E."/>
            <person name="McClanahan T.K."/>
            <person name="Zurawski G."/>
            <person name="Moshrefi M."/>
            <person name="Qin J."/>
            <person name="Li X."/>
            <person name="Gorman D.M."/>
            <person name="Bazan J.F."/>
            <person name="Kastelein R.A."/>
        </authorList>
    </citation>
    <scope>NUCLEOTIDE SEQUENCE [MRNA] (ISOFORM 1)</scope>
    <scope>FUNCTION</scope>
    <scope>PROTEOLYTIC PROCESSING</scope>
</reference>
<reference key="4">
    <citation type="journal article" date="2011" name="J. Biol. Chem.">
        <title>Identification of constitutively active interleukin 33 (IL-33) splice variant.</title>
        <authorList>
            <person name="Hong J."/>
            <person name="Bae S."/>
            <person name="Jhun H."/>
            <person name="Lee S."/>
            <person name="Choi J."/>
            <person name="Kang T."/>
            <person name="Kwak A."/>
            <person name="Hong K."/>
            <person name="Kim E."/>
            <person name="Jo S."/>
            <person name="Kim S."/>
        </authorList>
    </citation>
    <scope>NUCLEOTIDE SEQUENCE [MRNA] (ISOFORM 3)</scope>
</reference>
<reference key="5">
    <citation type="journal article" date="2004" name="Nat. Genet.">
        <title>Complete sequencing and characterization of 21,243 full-length human cDNAs.</title>
        <authorList>
            <person name="Ota T."/>
            <person name="Suzuki Y."/>
            <person name="Nishikawa T."/>
            <person name="Otsuki T."/>
            <person name="Sugiyama T."/>
            <person name="Irie R."/>
            <person name="Wakamatsu A."/>
            <person name="Hayashi K."/>
            <person name="Sato H."/>
            <person name="Nagai K."/>
            <person name="Kimura K."/>
            <person name="Makita H."/>
            <person name="Sekine M."/>
            <person name="Obayashi M."/>
            <person name="Nishi T."/>
            <person name="Shibahara T."/>
            <person name="Tanaka T."/>
            <person name="Ishii S."/>
            <person name="Yamamoto J."/>
            <person name="Saito K."/>
            <person name="Kawai Y."/>
            <person name="Isono Y."/>
            <person name="Nakamura Y."/>
            <person name="Nagahari K."/>
            <person name="Murakami K."/>
            <person name="Yasuda T."/>
            <person name="Iwayanagi T."/>
            <person name="Wagatsuma M."/>
            <person name="Shiratori A."/>
            <person name="Sudo H."/>
            <person name="Hosoiri T."/>
            <person name="Kaku Y."/>
            <person name="Kodaira H."/>
            <person name="Kondo H."/>
            <person name="Sugawara M."/>
            <person name="Takahashi M."/>
            <person name="Kanda K."/>
            <person name="Yokoi T."/>
            <person name="Furuya T."/>
            <person name="Kikkawa E."/>
            <person name="Omura Y."/>
            <person name="Abe K."/>
            <person name="Kamihara K."/>
            <person name="Katsuta N."/>
            <person name="Sato K."/>
            <person name="Tanikawa M."/>
            <person name="Yamazaki M."/>
            <person name="Ninomiya K."/>
            <person name="Ishibashi T."/>
            <person name="Yamashita H."/>
            <person name="Murakawa K."/>
            <person name="Fujimori K."/>
            <person name="Tanai H."/>
            <person name="Kimata M."/>
            <person name="Watanabe M."/>
            <person name="Hiraoka S."/>
            <person name="Chiba Y."/>
            <person name="Ishida S."/>
            <person name="Ono Y."/>
            <person name="Takiguchi S."/>
            <person name="Watanabe S."/>
            <person name="Yosida M."/>
            <person name="Hotuta T."/>
            <person name="Kusano J."/>
            <person name="Kanehori K."/>
            <person name="Takahashi-Fujii A."/>
            <person name="Hara H."/>
            <person name="Tanase T.-O."/>
            <person name="Nomura Y."/>
            <person name="Togiya S."/>
            <person name="Komai F."/>
            <person name="Hara R."/>
            <person name="Takeuchi K."/>
            <person name="Arita M."/>
            <person name="Imose N."/>
            <person name="Musashino K."/>
            <person name="Yuuki H."/>
            <person name="Oshima A."/>
            <person name="Sasaki N."/>
            <person name="Aotsuka S."/>
            <person name="Yoshikawa Y."/>
            <person name="Matsunawa H."/>
            <person name="Ichihara T."/>
            <person name="Shiohata N."/>
            <person name="Sano S."/>
            <person name="Moriya S."/>
            <person name="Momiyama H."/>
            <person name="Satoh N."/>
            <person name="Takami S."/>
            <person name="Terashima Y."/>
            <person name="Suzuki O."/>
            <person name="Nakagawa S."/>
            <person name="Senoh A."/>
            <person name="Mizoguchi H."/>
            <person name="Goto Y."/>
            <person name="Shimizu F."/>
            <person name="Wakebe H."/>
            <person name="Hishigaki H."/>
            <person name="Watanabe T."/>
            <person name="Sugiyama A."/>
            <person name="Takemoto M."/>
            <person name="Kawakami B."/>
            <person name="Yamazaki M."/>
            <person name="Watanabe K."/>
            <person name="Kumagai A."/>
            <person name="Itakura S."/>
            <person name="Fukuzumi Y."/>
            <person name="Fujimori Y."/>
            <person name="Komiyama M."/>
            <person name="Tashiro H."/>
            <person name="Tanigami A."/>
            <person name="Fujiwara T."/>
            <person name="Ono T."/>
            <person name="Yamada K."/>
            <person name="Fujii Y."/>
            <person name="Ozaki K."/>
            <person name="Hirao M."/>
            <person name="Ohmori Y."/>
            <person name="Kawabata A."/>
            <person name="Hikiji T."/>
            <person name="Kobatake N."/>
            <person name="Inagaki H."/>
            <person name="Ikema Y."/>
            <person name="Okamoto S."/>
            <person name="Okitani R."/>
            <person name="Kawakami T."/>
            <person name="Noguchi S."/>
            <person name="Itoh T."/>
            <person name="Shigeta K."/>
            <person name="Senba T."/>
            <person name="Matsumura K."/>
            <person name="Nakajima Y."/>
            <person name="Mizuno T."/>
            <person name="Morinaga M."/>
            <person name="Sasaki M."/>
            <person name="Togashi T."/>
            <person name="Oyama M."/>
            <person name="Hata H."/>
            <person name="Watanabe M."/>
            <person name="Komatsu T."/>
            <person name="Mizushima-Sugano J."/>
            <person name="Satoh T."/>
            <person name="Shirai Y."/>
            <person name="Takahashi Y."/>
            <person name="Nakagawa K."/>
            <person name="Okumura K."/>
            <person name="Nagase T."/>
            <person name="Nomura N."/>
            <person name="Kikuchi H."/>
            <person name="Masuho Y."/>
            <person name="Yamashita R."/>
            <person name="Nakai K."/>
            <person name="Yada T."/>
            <person name="Nakamura Y."/>
            <person name="Ohara O."/>
            <person name="Isogai T."/>
            <person name="Sugano S."/>
        </authorList>
    </citation>
    <scope>NUCLEOTIDE SEQUENCE [LARGE SCALE MRNA] (ISOFORMS 1; 2 AND 4)</scope>
    <source>
        <tissue>Adrenal gland</tissue>
        <tissue>Trachea</tissue>
    </source>
</reference>
<reference key="6">
    <citation type="submission" date="2004-05" db="EMBL/GenBank/DDBJ databases">
        <title>Cloning of human full open reading frames in Gateway(TM) system entry vector (pDONR201).</title>
        <authorList>
            <person name="Ebert L."/>
            <person name="Schick M."/>
            <person name="Neubert P."/>
            <person name="Schatten R."/>
            <person name="Henze S."/>
            <person name="Korn B."/>
        </authorList>
    </citation>
    <scope>NUCLEOTIDE SEQUENCE [LARGE SCALE MRNA] (ISOFORM 1)</scope>
</reference>
<reference key="7">
    <citation type="journal article" date="2004" name="Nature">
        <title>DNA sequence and analysis of human chromosome 9.</title>
        <authorList>
            <person name="Humphray S.J."/>
            <person name="Oliver K."/>
            <person name="Hunt A.R."/>
            <person name="Plumb R.W."/>
            <person name="Loveland J.E."/>
            <person name="Howe K.L."/>
            <person name="Andrews T.D."/>
            <person name="Searle S."/>
            <person name="Hunt S.E."/>
            <person name="Scott C.E."/>
            <person name="Jones M.C."/>
            <person name="Ainscough R."/>
            <person name="Almeida J.P."/>
            <person name="Ambrose K.D."/>
            <person name="Ashwell R.I.S."/>
            <person name="Babbage A.K."/>
            <person name="Babbage S."/>
            <person name="Bagguley C.L."/>
            <person name="Bailey J."/>
            <person name="Banerjee R."/>
            <person name="Barker D.J."/>
            <person name="Barlow K.F."/>
            <person name="Bates K."/>
            <person name="Beasley H."/>
            <person name="Beasley O."/>
            <person name="Bird C.P."/>
            <person name="Bray-Allen S."/>
            <person name="Brown A.J."/>
            <person name="Brown J.Y."/>
            <person name="Burford D."/>
            <person name="Burrill W."/>
            <person name="Burton J."/>
            <person name="Carder C."/>
            <person name="Carter N.P."/>
            <person name="Chapman J.C."/>
            <person name="Chen Y."/>
            <person name="Clarke G."/>
            <person name="Clark S.Y."/>
            <person name="Clee C.M."/>
            <person name="Clegg S."/>
            <person name="Collier R.E."/>
            <person name="Corby N."/>
            <person name="Crosier M."/>
            <person name="Cummings A.T."/>
            <person name="Davies J."/>
            <person name="Dhami P."/>
            <person name="Dunn M."/>
            <person name="Dutta I."/>
            <person name="Dyer L.W."/>
            <person name="Earthrowl M.E."/>
            <person name="Faulkner L."/>
            <person name="Fleming C.J."/>
            <person name="Frankish A."/>
            <person name="Frankland J.A."/>
            <person name="French L."/>
            <person name="Fricker D.G."/>
            <person name="Garner P."/>
            <person name="Garnett J."/>
            <person name="Ghori J."/>
            <person name="Gilbert J.G.R."/>
            <person name="Glison C."/>
            <person name="Grafham D.V."/>
            <person name="Gribble S."/>
            <person name="Griffiths C."/>
            <person name="Griffiths-Jones S."/>
            <person name="Grocock R."/>
            <person name="Guy J."/>
            <person name="Hall R.E."/>
            <person name="Hammond S."/>
            <person name="Harley J.L."/>
            <person name="Harrison E.S.I."/>
            <person name="Hart E.A."/>
            <person name="Heath P.D."/>
            <person name="Henderson C.D."/>
            <person name="Hopkins B.L."/>
            <person name="Howard P.J."/>
            <person name="Howden P.J."/>
            <person name="Huckle E."/>
            <person name="Johnson C."/>
            <person name="Johnson D."/>
            <person name="Joy A.A."/>
            <person name="Kay M."/>
            <person name="Keenan S."/>
            <person name="Kershaw J.K."/>
            <person name="Kimberley A.M."/>
            <person name="King A."/>
            <person name="Knights A."/>
            <person name="Laird G.K."/>
            <person name="Langford C."/>
            <person name="Lawlor S."/>
            <person name="Leongamornlert D.A."/>
            <person name="Leversha M."/>
            <person name="Lloyd C."/>
            <person name="Lloyd D.M."/>
            <person name="Lovell J."/>
            <person name="Martin S."/>
            <person name="Mashreghi-Mohammadi M."/>
            <person name="Matthews L."/>
            <person name="McLaren S."/>
            <person name="McLay K.E."/>
            <person name="McMurray A."/>
            <person name="Milne S."/>
            <person name="Nickerson T."/>
            <person name="Nisbett J."/>
            <person name="Nordsiek G."/>
            <person name="Pearce A.V."/>
            <person name="Peck A.I."/>
            <person name="Porter K.M."/>
            <person name="Pandian R."/>
            <person name="Pelan S."/>
            <person name="Phillimore B."/>
            <person name="Povey S."/>
            <person name="Ramsey Y."/>
            <person name="Rand V."/>
            <person name="Scharfe M."/>
            <person name="Sehra H.K."/>
            <person name="Shownkeen R."/>
            <person name="Sims S.K."/>
            <person name="Skuce C.D."/>
            <person name="Smith M."/>
            <person name="Steward C.A."/>
            <person name="Swarbreck D."/>
            <person name="Sycamore N."/>
            <person name="Tester J."/>
            <person name="Thorpe A."/>
            <person name="Tracey A."/>
            <person name="Tromans A."/>
            <person name="Thomas D.W."/>
            <person name="Wall M."/>
            <person name="Wallis J.M."/>
            <person name="West A.P."/>
            <person name="Whitehead S.L."/>
            <person name="Willey D.L."/>
            <person name="Williams S.A."/>
            <person name="Wilming L."/>
            <person name="Wray P.W."/>
            <person name="Young L."/>
            <person name="Ashurst J.L."/>
            <person name="Coulson A."/>
            <person name="Blocker H."/>
            <person name="Durbin R.M."/>
            <person name="Sulston J.E."/>
            <person name="Hubbard T."/>
            <person name="Jackson M.J."/>
            <person name="Bentley D.R."/>
            <person name="Beck S."/>
            <person name="Rogers J."/>
            <person name="Dunham I."/>
        </authorList>
    </citation>
    <scope>NUCLEOTIDE SEQUENCE [LARGE SCALE GENOMIC DNA]</scope>
</reference>
<reference key="8">
    <citation type="submission" date="2005-09" db="EMBL/GenBank/DDBJ databases">
        <authorList>
            <person name="Mural R.J."/>
            <person name="Istrail S."/>
            <person name="Sutton G.G."/>
            <person name="Florea L."/>
            <person name="Halpern A.L."/>
            <person name="Mobarry C.M."/>
            <person name="Lippert R."/>
            <person name="Walenz B."/>
            <person name="Shatkay H."/>
            <person name="Dew I."/>
            <person name="Miller J.R."/>
            <person name="Flanigan M.J."/>
            <person name="Edwards N.J."/>
            <person name="Bolanos R."/>
            <person name="Fasulo D."/>
            <person name="Halldorsson B.V."/>
            <person name="Hannenhalli S."/>
            <person name="Turner R."/>
            <person name="Yooseph S."/>
            <person name="Lu F."/>
            <person name="Nusskern D.R."/>
            <person name="Shue B.C."/>
            <person name="Zheng X.H."/>
            <person name="Zhong F."/>
            <person name="Delcher A.L."/>
            <person name="Huson D.H."/>
            <person name="Kravitz S.A."/>
            <person name="Mouchard L."/>
            <person name="Reinert K."/>
            <person name="Remington K.A."/>
            <person name="Clark A.G."/>
            <person name="Waterman M.S."/>
            <person name="Eichler E.E."/>
            <person name="Adams M.D."/>
            <person name="Hunkapiller M.W."/>
            <person name="Myers E.W."/>
            <person name="Venter J.C."/>
        </authorList>
    </citation>
    <scope>NUCLEOTIDE SEQUENCE [LARGE SCALE GENOMIC DNA]</scope>
</reference>
<reference key="9">
    <citation type="journal article" date="2004" name="Genome Res.">
        <title>The status, quality, and expansion of the NIH full-length cDNA project: the Mammalian Gene Collection (MGC).</title>
        <authorList>
            <consortium name="The MGC Project Team"/>
        </authorList>
    </citation>
    <scope>NUCLEOTIDE SEQUENCE [LARGE SCALE MRNA] (ISOFORM 1)</scope>
    <source>
        <tissue>Brain</tissue>
    </source>
</reference>
<reference key="10">
    <citation type="journal article" date="2012" name="Proc. Natl. Acad. Sci. U.S.A.">
        <title>IL-33 is processed into mature bioactive forms by neutrophil elastase and cathepsin G.</title>
        <authorList>
            <person name="Lefrancais E."/>
            <person name="Roga S."/>
            <person name="Gautier V."/>
            <person name="Gonzalez-de-Peredo A."/>
            <person name="Monsarrat B."/>
            <person name="Girard J.P."/>
            <person name="Cayrol C."/>
        </authorList>
    </citation>
    <scope>PROTEIN SEQUENCE OF 95-121</scope>
    <scope>IDENTIFICATION BY MASS SPECTROMETRY</scope>
    <scope>FUNCTION</scope>
    <scope>PROTEOLYTIC CLEAVAGE AT PHE-94 AND LEU-108 BY CSTG</scope>
    <scope>PROTEOLYTIC CLEAVAGE AT ILE-98 BY ELANE</scope>
</reference>
<reference key="11">
    <citation type="journal article" date="2007" name="Eur. J. Immunol.">
        <title>IL-33 is a chemoattractant for human Th2 cells.</title>
        <authorList>
            <person name="Komai-Koma M."/>
            <person name="Xu D."/>
            <person name="Li Y."/>
            <person name="McKenzie A.N."/>
            <person name="McInnes I.B."/>
            <person name="Liew F.Y."/>
        </authorList>
    </citation>
    <scope>FUNCTION</scope>
</reference>
<reference key="12">
    <citation type="journal article" date="2007" name="Proc. Natl. Acad. Sci. U.S.A.">
        <title>IL-33, the IL-1-like cytokine ligand for ST2 receptor, is a chromatin-associated nuclear factor in vivo.</title>
        <authorList>
            <person name="Carriere V."/>
            <person name="Roussel L."/>
            <person name="Ortega N."/>
            <person name="Lacorre D.A."/>
            <person name="Americh L."/>
            <person name="Aguilar L."/>
            <person name="Bouche G."/>
            <person name="Girard J.P."/>
        </authorList>
    </citation>
    <scope>FUNCTION</scope>
    <scope>SUBCELLULAR LOCATION</scope>
    <scope>NUCLEAR TARGETING DOMAIN</scope>
</reference>
<reference key="13">
    <citation type="journal article" date="2008" name="Am. J. Pathol.">
        <title>Nuclear interleukin-33 is generally expressed in resting endothelium but rapidly lost upon angiogenic or proinflammatory activation.</title>
        <authorList>
            <person name="Kuchler A.M."/>
            <person name="Pollheimer J."/>
            <person name="Balogh J."/>
            <person name="Sponheim J."/>
            <person name="Manley L."/>
            <person name="Sorensen D.R."/>
            <person name="De Angelis P.M."/>
            <person name="Scott H."/>
            <person name="Haraldsen G."/>
        </authorList>
    </citation>
    <scope>FUNCTION</scope>
    <scope>SUBCELLULAR LOCATION</scope>
</reference>
<reference key="14">
    <citation type="journal article" date="2008" name="PLoS ONE">
        <title>The IL-1-like cytokine IL-33 is constitutively expressed in the nucleus of endothelial cells and epithelial cells in vivo: a novel 'alarmin'?</title>
        <authorList>
            <person name="Moussion C."/>
            <person name="Ortega N."/>
            <person name="Girard J.P."/>
        </authorList>
    </citation>
    <scope>FUNCTION</scope>
    <scope>SUBCELLULAR LOCATION</scope>
</reference>
<reference key="15">
    <citation type="journal article" date="2009" name="Biochem. Biophys. Res. Commun.">
        <title>Mature interleukin-33 is produced by calpain-mediated cleavage in vivo.</title>
        <authorList>
            <person name="Hayakawa M."/>
            <person name="Hayakawa H."/>
            <person name="Matsuyama Y."/>
            <person name="Tamemoto H."/>
            <person name="Okazaki H."/>
            <person name="Tominaga S."/>
        </authorList>
    </citation>
    <scope>PROTEOLYTIC PROCESSING</scope>
</reference>
<reference key="16">
    <citation type="journal article" date="2009" name="Immunity">
        <title>Suppression of interleukin-33 bioactivity through proteolysis by apoptotic caspases.</title>
        <authorList>
            <person name="Luthi A.U."/>
            <person name="Cullen S.P."/>
            <person name="McNeela E.A."/>
            <person name="Duriez P.J."/>
            <person name="Afonina I.S."/>
            <person name="Sheridan C."/>
            <person name="Brumatti G."/>
            <person name="Taylor R.C."/>
            <person name="Kersse K."/>
            <person name="Vandenabeele P."/>
            <person name="Lavelle E.C."/>
            <person name="Martin S.J."/>
        </authorList>
    </citation>
    <scope>PROTEOLYTIC PROCESSING</scope>
</reference>
<reference key="17">
    <citation type="journal article" date="2009" name="J. Biol. Chem.">
        <title>Interleukin-33 is biologically active independently of caspase-1 cleavage.</title>
        <authorList>
            <person name="Talabot-Ayer D."/>
            <person name="Lamacchia C."/>
            <person name="Gabay C."/>
            <person name="Palmer G."/>
        </authorList>
    </citation>
    <scope>PROTEOLYTIC PROCESSING</scope>
    <scope>SUBCELLULAR LOCATION</scope>
</reference>
<reference key="18">
    <citation type="journal article" date="2009" name="J. Immunol.">
        <title>IL-33 amplifies the polarization of alternatively activated macrophages that contribute to airway inflammation.</title>
        <authorList>
            <person name="Kurowska-Stolarska M."/>
            <person name="Stolarski B."/>
            <person name="Kewin P."/>
            <person name="Murphy G."/>
            <person name="Corrigan C.J."/>
            <person name="Ying S."/>
            <person name="Pitman N."/>
            <person name="Mirchandani A."/>
            <person name="Rana B."/>
            <person name="van Rooijen N."/>
            <person name="Shepherd M."/>
            <person name="McSharry C."/>
            <person name="McInnes I.B."/>
            <person name="Xu D."/>
            <person name="Liew F.Y."/>
        </authorList>
    </citation>
    <scope>FUNCTION</scope>
</reference>
<reference key="19">
    <citation type="journal article" date="2009" name="Proc. Natl. Acad. Sci. U.S.A.">
        <title>The IL-1-like cytokine IL-33 is inactivated after maturation by caspase-1.</title>
        <authorList>
            <person name="Cayrol C."/>
            <person name="Girard J.P."/>
        </authorList>
    </citation>
    <scope>PROTEOLYTIC PROCESSING</scope>
</reference>
<reference key="20">
    <citation type="journal article" date="2011" name="J. Immunol.">
        <title>The dual function cytokine IL-33 interacts with the transcription factor NF-kappaB to dampen NF-kappaB-stimulated gene transcription.</title>
        <authorList>
            <person name="Ali S."/>
            <person name="Mohs A."/>
            <person name="Thomas M."/>
            <person name="Klare J."/>
            <person name="Ross R."/>
            <person name="Schmitz M.L."/>
            <person name="Martin M.U."/>
        </authorList>
    </citation>
    <scope>FUNCTION</scope>
    <scope>SUBCELLULAR LOCATION</scope>
</reference>
<reference key="21">
    <citation type="journal article" date="2012" name="J. Biol. Chem.">
        <title>Interleukin 33 as a mechanically responsive cytokine secreted by living cells.</title>
        <authorList>
            <person name="Kakkar R."/>
            <person name="Hei H."/>
            <person name="Dobner S."/>
            <person name="Lee R.T."/>
        </authorList>
    </citation>
    <scope>FUNCTION</scope>
    <scope>SUBCELLULAR LOCATION</scope>
</reference>
<reference key="22">
    <citation type="journal article" date="2017" name="Immunity">
        <title>HpARI Protein Secreted by a Helminth Parasite Suppresses Interleukin-33.</title>
        <authorList>
            <person name="Osbourn M."/>
            <person name="Soares D.C."/>
            <person name="Vacca F."/>
            <person name="Cohen E.S."/>
            <person name="Scott I.C."/>
            <person name="Gregory W.F."/>
            <person name="Smyth D.J."/>
            <person name="Toivakka M."/>
            <person name="Kemter A.M."/>
            <person name="le Bihan T."/>
            <person name="Wear M."/>
            <person name="Hoving D."/>
            <person name="Filbey K.J."/>
            <person name="Hewitson J.P."/>
            <person name="Henderson H."/>
            <person name="Gonzalez-Ciscar A."/>
            <person name="Errington C."/>
            <person name="Vermeren S."/>
            <person name="Astier A.L."/>
            <person name="Wallace W.A."/>
            <person name="Schwarze J."/>
            <person name="Ivens A.C."/>
            <person name="Maizels R.M."/>
            <person name="McSorley H.J."/>
        </authorList>
    </citation>
    <scope>INTERACTION WITH H.POLYGYRUS ARI</scope>
    <scope>INDUCTION BY H.POLYGYRUS</scope>
</reference>
<reference key="23">
    <citation type="journal article" date="2009" name="Structure">
        <title>Structure of IL-33 and its interaction with the ST2 and IL-1RAcP receptors--insight into heterotrimeric IL-1 signaling complexes.</title>
        <authorList>
            <person name="Lingel A."/>
            <person name="Weiss T.M."/>
            <person name="Niebuhr M."/>
            <person name="Pan B."/>
            <person name="Appleton B.A."/>
            <person name="Wiesmann C."/>
            <person name="Bazan J.F."/>
            <person name="Fairbrother W.J."/>
        </authorList>
    </citation>
    <scope>STRUCTURE BY NMR OF 111-270</scope>
    <scope>INTERACTION WITH IL1RL1 AND IL1RAP</scope>
    <scope>SUBUNIT</scope>
</reference>
<reference key="24">
    <citation type="journal article" date="2020" name="Cell">
        <title>A Translocation Pathway for Vesicle-Mediated Unconventional Protein Secretion.</title>
        <authorList>
            <person name="Zhang M."/>
            <person name="Liu L."/>
            <person name="Lin X."/>
            <person name="Wang Y."/>
            <person name="Li Y."/>
            <person name="Guo Q."/>
            <person name="Li S."/>
            <person name="Sun Y."/>
            <person name="Tao X."/>
            <person name="Zhang D."/>
            <person name="Lv X."/>
            <person name="Zheng L."/>
            <person name="Ge L."/>
        </authorList>
    </citation>
    <scope>SUBCELLULAR LOCATION</scope>
    <scope>INTERACTION WITH TMED10</scope>
</reference>
<reference key="25">
    <citation type="journal article" date="2022" name="Nat. Immunol.">
        <title>Allergen protease-activated stress granule assembly and gasdermin D fragmentation control interleukin-33 secretion.</title>
        <authorList>
            <person name="Chen W."/>
            <person name="Chen S."/>
            <person name="Yan C."/>
            <person name="Zhang Y."/>
            <person name="Zhang R."/>
            <person name="Chen M."/>
            <person name="Zhong S."/>
            <person name="Fan W."/>
            <person name="Zhu S."/>
            <person name="Zhang D."/>
            <person name="Lu X."/>
            <person name="Zhang J."/>
            <person name="Huang Y."/>
            <person name="Zhu L."/>
            <person name="Li X."/>
            <person name="Lv D."/>
            <person name="Fu Y."/>
            <person name="Iv H."/>
            <person name="Ling Z."/>
            <person name="Ma L."/>
            <person name="Jiang H."/>
            <person name="Long G."/>
            <person name="Zhu J."/>
            <person name="Wu D."/>
            <person name="Wu B."/>
            <person name="Sun B."/>
        </authorList>
    </citation>
    <scope>SUBCELLULAR LOCATION</scope>
    <scope>PROTEOLYTIC CLEAVAGE</scope>
</reference>
<reference key="26">
    <citation type="journal article" date="2013" name="Proc. Natl. Acad. Sci. U.S.A.">
        <title>Structural insights into the interaction of IL-33 with its receptors.</title>
        <authorList>
            <person name="Liu X."/>
            <person name="Hammel M."/>
            <person name="He Y."/>
            <person name="Tainer J.A."/>
            <person name="Jeng U.S."/>
            <person name="Zhang L."/>
            <person name="Wang S."/>
            <person name="Wang X."/>
        </authorList>
    </citation>
    <scope>X-RAY CRYSTALLOGRAPHY (3.27 ANGSTROMS) OF 112-270 IN COMPLEX WITH IL1RL1/ST2</scope>
    <scope>MUTAGENESIS OF GLU-144; GLU-148; ASP-149; GLU-165 AND ASP-244</scope>
</reference>
<keyword id="KW-0002">3D-structure</keyword>
<keyword id="KW-0025">Alternative splicing</keyword>
<keyword id="KW-0158">Chromosome</keyword>
<keyword id="KW-0202">Cytokine</keyword>
<keyword id="KW-0963">Cytoplasm</keyword>
<keyword id="KW-0968">Cytoplasmic vesicle</keyword>
<keyword id="KW-0903">Direct protein sequencing</keyword>
<keyword id="KW-0539">Nucleus</keyword>
<keyword id="KW-1267">Proteomics identification</keyword>
<keyword id="KW-1185">Reference proteome</keyword>
<keyword id="KW-0964">Secreted</keyword>
<keyword id="KW-0804">Transcription</keyword>
<comment type="function">
    <text evidence="1 3 5 7 13">Cytokine that binds to and signals through the IL1RL1/ST2 receptor which in turn activates NF-kappa-B and MAPK signaling pathways in target cells (PubMed:16286016, PubMed:19841166). Involved in the maturation of Th2 cells inducing the secretion of T-helper type 2-associated cytokines (PubMed:17853410, PubMed:18836528). Also involved in activation of mast cells, basophils, eosinophils and natural killer cells (PubMed:17853410, PubMed:18836528). Acts as an enhancer of polarization of alternatively activated macrophages (PubMed:19841166). Acts as a chemoattractant for Th2 cells, and may function as an 'alarmin', that amplifies immune responses during tissue injury (PubMed:17853410, PubMed:18836528). Induces rapid UCP2-dependent mitochondrial rewiring that attenuates the generation of reactive oxygen species and preserves the integrity of Krebs cycle required for persistent production of itaconate and subsequent GATA3-dependent differentiation of inflammation-resolving alternatively activated macrophages (By similarity).</text>
</comment>
<comment type="function">
    <text evidence="6 14">In quiescent endothelia the uncleaved form is constitutively and abundantly expressed, and acts as a chromatin-associated nuclear factor with transcriptional repressor properties, it may sequester nuclear NF-kappaB/RELA, lowering expression of its targets (PubMed:21734074). This form is rapidely lost upon angiogenic or pro-inflammatory activation (PubMed:18787100).</text>
</comment>
<comment type="subunit">
    <text evidence="12 17 19">Forms a 1:1:1 heterotrimeric complex with its primary high-affinity receptor IL1RL1 and the coreceptor IL1RAP (PubMed:19836339, PubMed:23980170). Interacts with cargo receptor TMED10; the interaction mediates the translocation from the cytoplasm into the ERGIC (endoplasmic reticulum-Golgi intermediate compartment) and thereby secretion (PubMed:32272059).</text>
</comment>
<comment type="subunit">
    <text evidence="18">(Microbial infection) Interacts (in reduced form) with H.polygyrus ARI.</text>
</comment>
<comment type="interaction">
    <interactant intactId="EBI-724057">
        <id>O95760</id>
    </interactant>
    <interactant intactId="EBI-1390628">
        <id>P0C0S8</id>
        <label>H2AC17</label>
    </interactant>
    <organismsDiffer>false</organismsDiffer>
    <experiments>3</experiments>
</comment>
<comment type="interaction">
    <interactant intactId="EBI-724057">
        <id>O95760</id>
    </interactant>
    <interactant intactId="EBI-993762">
        <id>Q01638</id>
        <label>IL1RL1</label>
    </interactant>
    <organismsDiffer>false</organismsDiffer>
    <experiments>2</experiments>
</comment>
<comment type="subcellular location">
    <subcellularLocation>
        <location evidence="2 4 6 7 14">Nucleus</location>
    </subcellularLocation>
    <subcellularLocation>
        <location evidence="4">Chromosome</location>
    </subcellularLocation>
    <subcellularLocation>
        <location evidence="19">Cytoplasm</location>
    </subcellularLocation>
    <subcellularLocation>
        <location evidence="15">Cytoplasmic vesicle</location>
        <location evidence="15">Secretory vesicle</location>
    </subcellularLocation>
    <subcellularLocation>
        <location evidence="9 20">Secreted</location>
    </subcellularLocation>
    <text evidence="19 20">Secreted and released in the extracellular milieu by passing through the gasdermin-D (GSDMD) pore following cleavage by CELA1 (PubMed:35794369). Associates with heterochromatin and mitotic chromosomes (PubMed:17185418). The secretion is dependent on protein unfolding and facilitated by the cargo receptor TMED10; it results in protein translocation from the cytoplasm into the ERGIC (endoplasmic reticulum-Golgi intermediate compartment) followed by vesicle entry and secretion (PubMed:32272059).</text>
</comment>
<comment type="alternative products">
    <event type="alternative splicing"/>
    <isoform>
        <id>O95760-1</id>
        <name>1</name>
        <sequence type="displayed"/>
    </isoform>
    <isoform>
        <id>O95760-2</id>
        <name>2</name>
        <sequence type="described" ref="VSP_042728"/>
    </isoform>
    <isoform>
        <id>O95760-3</id>
        <name>3</name>
        <name>spIL-33</name>
        <sequence type="described" ref="VSP_044948"/>
    </isoform>
    <isoform>
        <id>O95760-4</id>
        <name>4</name>
        <sequence type="described" ref="VSP_045440"/>
    </isoform>
</comment>
<comment type="tissue specificity">
    <text evidence="2">Expressed at high level in high endothelial venules found in tonsils, Peyer patches and mesenteric lymph nodes. Almost undetectable in placenta.</text>
</comment>
<comment type="induction">
    <text evidence="18">By infection with the parasite H.polygyrus.</text>
</comment>
<comment type="domain">
    <text evidence="4">The homeodomain-like HTH domain mediates nuclear localization and heterochromatin association.</text>
</comment>
<comment type="PTM">
    <text evidence="3 8 9 10 11 16 20">The full-length protein can be released from cells and is able to signal via the IL1RL1/ST2 receptor. However, proteolytic processing by CELA1, CSTG/cathepsin G and ELANE/neutrophil elastase produces C-terminal peptides that are more active than the unprocessed full length protein (PubMed:22307629, PubMed:35794369). May also be proteolytically processed by calpains (PubMed:19596270, PubMed:22307629). Proteolytic cleavage mediated by apoptotic caspases including CASP3 and CASP7 results in IL33 inactivation (PubMed:19559631). In vitro proteolytic cleavage by CASP1 was reported (PubMed:16286016, PubMed:19439663) but could not be confirmed in vivo (PubMed:19465481) suggesting that IL33 is probably not a direct substrate for that caspase (PubMed:19439663, PubMed:19465481).</text>
</comment>
<comment type="miscellaneous">
    <molecule>Isoform 3</molecule>
    <text evidence="23">Constitutively active.</text>
</comment>
<comment type="similarity">
    <text evidence="23">Belongs to the IL-1 family. Highly divergent.</text>
</comment>
<protein>
    <recommendedName>
        <fullName>Interleukin-33</fullName>
        <shortName>IL-33</shortName>
    </recommendedName>
    <alternativeName>
        <fullName>Interleukin-1 family member 11</fullName>
        <shortName>IL-1F11</shortName>
    </alternativeName>
    <alternativeName>
        <fullName>Nuclear factor from high endothelial venules</fullName>
        <shortName>NF-HEV</shortName>
    </alternativeName>
    <component>
        <recommendedName>
            <fullName>Interleukin-33 (95-270)</fullName>
        </recommendedName>
    </component>
    <component>
        <recommendedName>
            <fullName>Interleukin-33 (99-270)</fullName>
        </recommendedName>
    </component>
    <component>
        <recommendedName>
            <fullName>Interleukin-33 (109-270)</fullName>
        </recommendedName>
    </component>
</protein>